<evidence type="ECO:0000250" key="1">
    <source>
        <dbReference type="UniProtKB" id="P0C0S5"/>
    </source>
</evidence>
<evidence type="ECO:0000250" key="2">
    <source>
        <dbReference type="UniProtKB" id="P22752"/>
    </source>
</evidence>
<evidence type="ECO:0000250" key="3">
    <source>
        <dbReference type="UniProtKB" id="Q8BFU2"/>
    </source>
</evidence>
<evidence type="ECO:0000256" key="4">
    <source>
        <dbReference type="SAM" id="MobiDB-lite"/>
    </source>
</evidence>
<evidence type="ECO:0000269" key="5">
    <source>
    </source>
</evidence>
<evidence type="ECO:0000269" key="6">
    <source>
    </source>
</evidence>
<evidence type="ECO:0000269" key="7">
    <source>
    </source>
</evidence>
<evidence type="ECO:0000269" key="8">
    <source>
    </source>
</evidence>
<evidence type="ECO:0000269" key="9">
    <source>
    </source>
</evidence>
<evidence type="ECO:0000269" key="10">
    <source>
    </source>
</evidence>
<evidence type="ECO:0000269" key="11">
    <source>
    </source>
</evidence>
<evidence type="ECO:0000269" key="12">
    <source>
    </source>
</evidence>
<evidence type="ECO:0000269" key="13">
    <source>
    </source>
</evidence>
<evidence type="ECO:0000269" key="14">
    <source>
    </source>
</evidence>
<evidence type="ECO:0000269" key="15">
    <source>
    </source>
</evidence>
<evidence type="ECO:0000269" key="16">
    <source>
    </source>
</evidence>
<evidence type="ECO:0000269" key="17">
    <source>
    </source>
</evidence>
<evidence type="ECO:0000269" key="18">
    <source>
    </source>
</evidence>
<evidence type="ECO:0000269" key="19">
    <source>
    </source>
</evidence>
<evidence type="ECO:0000269" key="20">
    <source>
    </source>
</evidence>
<evidence type="ECO:0000269" key="21">
    <source>
    </source>
</evidence>
<evidence type="ECO:0000269" key="22">
    <source>
    </source>
</evidence>
<evidence type="ECO:0000269" key="23">
    <source>
    </source>
</evidence>
<evidence type="ECO:0000269" key="24">
    <source>
    </source>
</evidence>
<evidence type="ECO:0000269" key="25">
    <source>
    </source>
</evidence>
<evidence type="ECO:0000305" key="26"/>
<evidence type="ECO:0000312" key="27">
    <source>
        <dbReference type="HGNC" id="HGNC:20507"/>
    </source>
</evidence>
<evidence type="ECO:0007829" key="28">
    <source>
        <dbReference type="PDB" id="9FH9"/>
    </source>
</evidence>
<name>H2A3_HUMAN</name>
<reference key="1">
    <citation type="journal article" date="2002" name="Genomics">
        <title>The human and mouse replication-dependent histone genes.</title>
        <authorList>
            <person name="Marzluff W.F."/>
            <person name="Gongidi P."/>
            <person name="Woods K.R."/>
            <person name="Jin J."/>
            <person name="Maltais L.J."/>
        </authorList>
    </citation>
    <scope>NUCLEOTIDE SEQUENCE [GENOMIC DNA]</scope>
</reference>
<reference key="2">
    <citation type="journal article" date="2004" name="Nat. Genet.">
        <title>Complete sequencing and characterization of 21,243 full-length human cDNAs.</title>
        <authorList>
            <person name="Ota T."/>
            <person name="Suzuki Y."/>
            <person name="Nishikawa T."/>
            <person name="Otsuki T."/>
            <person name="Sugiyama T."/>
            <person name="Irie R."/>
            <person name="Wakamatsu A."/>
            <person name="Hayashi K."/>
            <person name="Sato H."/>
            <person name="Nagai K."/>
            <person name="Kimura K."/>
            <person name="Makita H."/>
            <person name="Sekine M."/>
            <person name="Obayashi M."/>
            <person name="Nishi T."/>
            <person name="Shibahara T."/>
            <person name="Tanaka T."/>
            <person name="Ishii S."/>
            <person name="Yamamoto J."/>
            <person name="Saito K."/>
            <person name="Kawai Y."/>
            <person name="Isono Y."/>
            <person name="Nakamura Y."/>
            <person name="Nagahari K."/>
            <person name="Murakami K."/>
            <person name="Yasuda T."/>
            <person name="Iwayanagi T."/>
            <person name="Wagatsuma M."/>
            <person name="Shiratori A."/>
            <person name="Sudo H."/>
            <person name="Hosoiri T."/>
            <person name="Kaku Y."/>
            <person name="Kodaira H."/>
            <person name="Kondo H."/>
            <person name="Sugawara M."/>
            <person name="Takahashi M."/>
            <person name="Kanda K."/>
            <person name="Yokoi T."/>
            <person name="Furuya T."/>
            <person name="Kikkawa E."/>
            <person name="Omura Y."/>
            <person name="Abe K."/>
            <person name="Kamihara K."/>
            <person name="Katsuta N."/>
            <person name="Sato K."/>
            <person name="Tanikawa M."/>
            <person name="Yamazaki M."/>
            <person name="Ninomiya K."/>
            <person name="Ishibashi T."/>
            <person name="Yamashita H."/>
            <person name="Murakawa K."/>
            <person name="Fujimori K."/>
            <person name="Tanai H."/>
            <person name="Kimata M."/>
            <person name="Watanabe M."/>
            <person name="Hiraoka S."/>
            <person name="Chiba Y."/>
            <person name="Ishida S."/>
            <person name="Ono Y."/>
            <person name="Takiguchi S."/>
            <person name="Watanabe S."/>
            <person name="Yosida M."/>
            <person name="Hotuta T."/>
            <person name="Kusano J."/>
            <person name="Kanehori K."/>
            <person name="Takahashi-Fujii A."/>
            <person name="Hara H."/>
            <person name="Tanase T.-O."/>
            <person name="Nomura Y."/>
            <person name="Togiya S."/>
            <person name="Komai F."/>
            <person name="Hara R."/>
            <person name="Takeuchi K."/>
            <person name="Arita M."/>
            <person name="Imose N."/>
            <person name="Musashino K."/>
            <person name="Yuuki H."/>
            <person name="Oshima A."/>
            <person name="Sasaki N."/>
            <person name="Aotsuka S."/>
            <person name="Yoshikawa Y."/>
            <person name="Matsunawa H."/>
            <person name="Ichihara T."/>
            <person name="Shiohata N."/>
            <person name="Sano S."/>
            <person name="Moriya S."/>
            <person name="Momiyama H."/>
            <person name="Satoh N."/>
            <person name="Takami S."/>
            <person name="Terashima Y."/>
            <person name="Suzuki O."/>
            <person name="Nakagawa S."/>
            <person name="Senoh A."/>
            <person name="Mizoguchi H."/>
            <person name="Goto Y."/>
            <person name="Shimizu F."/>
            <person name="Wakebe H."/>
            <person name="Hishigaki H."/>
            <person name="Watanabe T."/>
            <person name="Sugiyama A."/>
            <person name="Takemoto M."/>
            <person name="Kawakami B."/>
            <person name="Yamazaki M."/>
            <person name="Watanabe K."/>
            <person name="Kumagai A."/>
            <person name="Itakura S."/>
            <person name="Fukuzumi Y."/>
            <person name="Fujimori Y."/>
            <person name="Komiyama M."/>
            <person name="Tashiro H."/>
            <person name="Tanigami A."/>
            <person name="Fujiwara T."/>
            <person name="Ono T."/>
            <person name="Yamada K."/>
            <person name="Fujii Y."/>
            <person name="Ozaki K."/>
            <person name="Hirao M."/>
            <person name="Ohmori Y."/>
            <person name="Kawabata A."/>
            <person name="Hikiji T."/>
            <person name="Kobatake N."/>
            <person name="Inagaki H."/>
            <person name="Ikema Y."/>
            <person name="Okamoto S."/>
            <person name="Okitani R."/>
            <person name="Kawakami T."/>
            <person name="Noguchi S."/>
            <person name="Itoh T."/>
            <person name="Shigeta K."/>
            <person name="Senba T."/>
            <person name="Matsumura K."/>
            <person name="Nakajima Y."/>
            <person name="Mizuno T."/>
            <person name="Morinaga M."/>
            <person name="Sasaki M."/>
            <person name="Togashi T."/>
            <person name="Oyama M."/>
            <person name="Hata H."/>
            <person name="Watanabe M."/>
            <person name="Komatsu T."/>
            <person name="Mizushima-Sugano J."/>
            <person name="Satoh T."/>
            <person name="Shirai Y."/>
            <person name="Takahashi Y."/>
            <person name="Nakagawa K."/>
            <person name="Okumura K."/>
            <person name="Nagase T."/>
            <person name="Nomura N."/>
            <person name="Kikuchi H."/>
            <person name="Masuho Y."/>
            <person name="Yamashita R."/>
            <person name="Nakai K."/>
            <person name="Yada T."/>
            <person name="Nakamura Y."/>
            <person name="Ohara O."/>
            <person name="Isogai T."/>
            <person name="Sugano S."/>
        </authorList>
    </citation>
    <scope>NUCLEOTIDE SEQUENCE [LARGE SCALE MRNA]</scope>
    <source>
        <tissue>Brain</tissue>
    </source>
</reference>
<reference key="3">
    <citation type="journal article" date="2006" name="Nature">
        <title>The DNA sequence and biological annotation of human chromosome 1.</title>
        <authorList>
            <person name="Gregory S.G."/>
            <person name="Barlow K.F."/>
            <person name="McLay K.E."/>
            <person name="Kaul R."/>
            <person name="Swarbreck D."/>
            <person name="Dunham A."/>
            <person name="Scott C.E."/>
            <person name="Howe K.L."/>
            <person name="Woodfine K."/>
            <person name="Spencer C.C.A."/>
            <person name="Jones M.C."/>
            <person name="Gillson C."/>
            <person name="Searle S."/>
            <person name="Zhou Y."/>
            <person name="Kokocinski F."/>
            <person name="McDonald L."/>
            <person name="Evans R."/>
            <person name="Phillips K."/>
            <person name="Atkinson A."/>
            <person name="Cooper R."/>
            <person name="Jones C."/>
            <person name="Hall R.E."/>
            <person name="Andrews T.D."/>
            <person name="Lloyd C."/>
            <person name="Ainscough R."/>
            <person name="Almeida J.P."/>
            <person name="Ambrose K.D."/>
            <person name="Anderson F."/>
            <person name="Andrew R.W."/>
            <person name="Ashwell R.I.S."/>
            <person name="Aubin K."/>
            <person name="Babbage A.K."/>
            <person name="Bagguley C.L."/>
            <person name="Bailey J."/>
            <person name="Beasley H."/>
            <person name="Bethel G."/>
            <person name="Bird C.P."/>
            <person name="Bray-Allen S."/>
            <person name="Brown J.Y."/>
            <person name="Brown A.J."/>
            <person name="Buckley D."/>
            <person name="Burton J."/>
            <person name="Bye J."/>
            <person name="Carder C."/>
            <person name="Chapman J.C."/>
            <person name="Clark S.Y."/>
            <person name="Clarke G."/>
            <person name="Clee C."/>
            <person name="Cobley V."/>
            <person name="Collier R.E."/>
            <person name="Corby N."/>
            <person name="Coville G.J."/>
            <person name="Davies J."/>
            <person name="Deadman R."/>
            <person name="Dunn M."/>
            <person name="Earthrowl M."/>
            <person name="Ellington A.G."/>
            <person name="Errington H."/>
            <person name="Frankish A."/>
            <person name="Frankland J."/>
            <person name="French L."/>
            <person name="Garner P."/>
            <person name="Garnett J."/>
            <person name="Gay L."/>
            <person name="Ghori M.R.J."/>
            <person name="Gibson R."/>
            <person name="Gilby L.M."/>
            <person name="Gillett W."/>
            <person name="Glithero R.J."/>
            <person name="Grafham D.V."/>
            <person name="Griffiths C."/>
            <person name="Griffiths-Jones S."/>
            <person name="Grocock R."/>
            <person name="Hammond S."/>
            <person name="Harrison E.S.I."/>
            <person name="Hart E."/>
            <person name="Haugen E."/>
            <person name="Heath P.D."/>
            <person name="Holmes S."/>
            <person name="Holt K."/>
            <person name="Howden P.J."/>
            <person name="Hunt A.R."/>
            <person name="Hunt S.E."/>
            <person name="Hunter G."/>
            <person name="Isherwood J."/>
            <person name="James R."/>
            <person name="Johnson C."/>
            <person name="Johnson D."/>
            <person name="Joy A."/>
            <person name="Kay M."/>
            <person name="Kershaw J.K."/>
            <person name="Kibukawa M."/>
            <person name="Kimberley A.M."/>
            <person name="King A."/>
            <person name="Knights A.J."/>
            <person name="Lad H."/>
            <person name="Laird G."/>
            <person name="Lawlor S."/>
            <person name="Leongamornlert D.A."/>
            <person name="Lloyd D.M."/>
            <person name="Loveland J."/>
            <person name="Lovell J."/>
            <person name="Lush M.J."/>
            <person name="Lyne R."/>
            <person name="Martin S."/>
            <person name="Mashreghi-Mohammadi M."/>
            <person name="Matthews L."/>
            <person name="Matthews N.S.W."/>
            <person name="McLaren S."/>
            <person name="Milne S."/>
            <person name="Mistry S."/>
            <person name="Moore M.J.F."/>
            <person name="Nickerson T."/>
            <person name="O'Dell C.N."/>
            <person name="Oliver K."/>
            <person name="Palmeiri A."/>
            <person name="Palmer S.A."/>
            <person name="Parker A."/>
            <person name="Patel D."/>
            <person name="Pearce A.V."/>
            <person name="Peck A.I."/>
            <person name="Pelan S."/>
            <person name="Phelps K."/>
            <person name="Phillimore B.J."/>
            <person name="Plumb R."/>
            <person name="Rajan J."/>
            <person name="Raymond C."/>
            <person name="Rouse G."/>
            <person name="Saenphimmachak C."/>
            <person name="Sehra H.K."/>
            <person name="Sheridan E."/>
            <person name="Shownkeen R."/>
            <person name="Sims S."/>
            <person name="Skuce C.D."/>
            <person name="Smith M."/>
            <person name="Steward C."/>
            <person name="Subramanian S."/>
            <person name="Sycamore N."/>
            <person name="Tracey A."/>
            <person name="Tromans A."/>
            <person name="Van Helmond Z."/>
            <person name="Wall M."/>
            <person name="Wallis J.M."/>
            <person name="White S."/>
            <person name="Whitehead S.L."/>
            <person name="Wilkinson J.E."/>
            <person name="Willey D.L."/>
            <person name="Williams H."/>
            <person name="Wilming L."/>
            <person name="Wray P.W."/>
            <person name="Wu Z."/>
            <person name="Coulson A."/>
            <person name="Vaudin M."/>
            <person name="Sulston J.E."/>
            <person name="Durbin R.M."/>
            <person name="Hubbard T."/>
            <person name="Wooster R."/>
            <person name="Dunham I."/>
            <person name="Carter N.P."/>
            <person name="McVean G."/>
            <person name="Ross M.T."/>
            <person name="Harrow J."/>
            <person name="Olson M.V."/>
            <person name="Beck S."/>
            <person name="Rogers J."/>
            <person name="Bentley D.R."/>
        </authorList>
    </citation>
    <scope>NUCLEOTIDE SEQUENCE [LARGE SCALE GENOMIC DNA]</scope>
</reference>
<reference key="4">
    <citation type="submission" date="2005-07" db="EMBL/GenBank/DDBJ databases">
        <authorList>
            <person name="Mural R.J."/>
            <person name="Istrail S."/>
            <person name="Sutton G.G."/>
            <person name="Florea L."/>
            <person name="Halpern A.L."/>
            <person name="Mobarry C.M."/>
            <person name="Lippert R."/>
            <person name="Walenz B."/>
            <person name="Shatkay H."/>
            <person name="Dew I."/>
            <person name="Miller J.R."/>
            <person name="Flanigan M.J."/>
            <person name="Edwards N.J."/>
            <person name="Bolanos R."/>
            <person name="Fasulo D."/>
            <person name="Halldorsson B.V."/>
            <person name="Hannenhalli S."/>
            <person name="Turner R."/>
            <person name="Yooseph S."/>
            <person name="Lu F."/>
            <person name="Nusskern D.R."/>
            <person name="Shue B.C."/>
            <person name="Zheng X.H."/>
            <person name="Zhong F."/>
            <person name="Delcher A.L."/>
            <person name="Huson D.H."/>
            <person name="Kravitz S.A."/>
            <person name="Mouchard L."/>
            <person name="Reinert K."/>
            <person name="Remington K.A."/>
            <person name="Clark A.G."/>
            <person name="Waterman M.S."/>
            <person name="Eichler E.E."/>
            <person name="Adams M.D."/>
            <person name="Hunkapiller M.W."/>
            <person name="Myers E.W."/>
            <person name="Venter J.C."/>
        </authorList>
    </citation>
    <scope>NUCLEOTIDE SEQUENCE [LARGE SCALE GENOMIC DNA]</scope>
</reference>
<reference key="5">
    <citation type="journal article" date="2004" name="Genome Res.">
        <title>The status, quality, and expansion of the NIH full-length cDNA project: the Mammalian Gene Collection (MGC).</title>
        <authorList>
            <consortium name="The MGC Project Team"/>
        </authorList>
    </citation>
    <scope>NUCLEOTIDE SEQUENCE [LARGE SCALE MRNA]</scope>
    <source>
        <tissue>Ovary</tissue>
    </source>
</reference>
<reference key="6">
    <citation type="journal article" date="2004" name="Genes Dev.">
        <title>Nucleosomal histone kinase-1 phosphorylates H2A Thr 119 during mitosis in the early Drosophila embryo.</title>
        <authorList>
            <person name="Aihara H."/>
            <person name="Nakagawa T."/>
            <person name="Yasui K."/>
            <person name="Ohta T."/>
            <person name="Hirose S."/>
            <person name="Dhomae N."/>
            <person name="Takio K."/>
            <person name="Kaneko M."/>
            <person name="Takeshima Y."/>
            <person name="Muramatsu M."/>
            <person name="Ito T."/>
        </authorList>
    </citation>
    <scope>PHOSPHORYLATION AT THR-121</scope>
</reference>
<reference key="7">
    <citation type="journal article" date="2004" name="J. Biol. Chem.">
        <title>Phosphorylation of histone H2A inhibits transcription on chromatin templates.</title>
        <authorList>
            <person name="Zhang Y."/>
            <person name="Griffin K."/>
            <person name="Mondal N."/>
            <person name="Parvin J.D."/>
        </authorList>
    </citation>
    <scope>PHOSPHORYLATION AT SER-2</scope>
    <scope>MUTAGENESIS OF SER-2</scope>
</reference>
<reference key="8">
    <citation type="journal article" date="2004" name="Nature">
        <title>Role of histone H2A ubiquitination in Polycomb silencing.</title>
        <authorList>
            <person name="Wang H."/>
            <person name="Wang L."/>
            <person name="Erdjument-Bromage H."/>
            <person name="Vidal M."/>
            <person name="Tempst P."/>
            <person name="Jones R.S."/>
            <person name="Zhang Y."/>
        </authorList>
    </citation>
    <scope>UBIQUITINATION AT LYS-120</scope>
</reference>
<reference key="9">
    <citation type="journal article" date="2005" name="Biochemistry">
        <title>Deimination of histone H2A and H4 at arginine 3 in HL-60 granulocytes.</title>
        <authorList>
            <person name="Hagiwara T."/>
            <person name="Hidaka Y."/>
            <person name="Yamada M."/>
        </authorList>
    </citation>
    <scope>ACETYLATION AT SER-2</scope>
    <scope>CITRULLINATION AT ARG-4</scope>
    <scope>IDENTIFICATION BY MASS SPECTROMETRY</scope>
</reference>
<reference key="10">
    <citation type="journal article" date="2005" name="Mol. Cell">
        <title>Role of Bmi-1 and Ring1A in H2A ubiquitylation and Hox gene silencing.</title>
        <authorList>
            <person name="Cao R."/>
            <person name="Tsukada Y."/>
            <person name="Zhang Y."/>
        </authorList>
    </citation>
    <scope>UBIQUITINATION AT LYS-120</scope>
</reference>
<reference key="11">
    <citation type="journal article" date="2006" name="Genes Dev.">
        <title>DNA damage triggers nucleotide excision repair-dependent monoubiquitylation of histone H2A.</title>
        <authorList>
            <person name="Bergink S."/>
            <person name="Salomons F.A."/>
            <person name="Hoogstraten D."/>
            <person name="Groothuis T.A.M."/>
            <person name="de Waard H."/>
            <person name="Wu J."/>
            <person name="Yuan L."/>
            <person name="Citterio E."/>
            <person name="Houtsmuller A.B."/>
            <person name="Neefjes J."/>
            <person name="Hoeijmakers J.H.J."/>
            <person name="Vermeulen W."/>
            <person name="Dantuma N.P."/>
        </authorList>
    </citation>
    <scope>UBIQUITINATION AT LYS-120</scope>
</reference>
<reference key="12">
    <citation type="journal article" date="2007" name="Cell">
        <title>RNF8 ubiquitylates histones at DNA double-strand breaks and promotes assembly of repair proteins.</title>
        <authorList>
            <person name="Mailand N."/>
            <person name="Bekker-Jensen S."/>
            <person name="Faustrup H."/>
            <person name="Melander F."/>
            <person name="Bartek J."/>
            <person name="Lukas C."/>
            <person name="Lukas J."/>
        </authorList>
    </citation>
    <scope>UBIQUITINATION</scope>
</reference>
<reference key="13">
    <citation type="journal article" date="2007" name="Cell">
        <title>RNF8 transduces the DNA-damage signal via histone ubiquitylation and checkpoint protein assembly.</title>
        <authorList>
            <person name="Huen M.S.Y."/>
            <person name="Grant R."/>
            <person name="Manke I."/>
            <person name="Minn K."/>
            <person name="Yu X."/>
            <person name="Yaffe M.B."/>
            <person name="Chen J."/>
        </authorList>
    </citation>
    <scope>UBIQUITINATION</scope>
</reference>
<reference key="14">
    <citation type="journal article" date="2009" name="Cell">
        <title>The RIDDLE syndrome protein mediates a ubiquitin-dependent signaling cascade at sites of DNA damage.</title>
        <authorList>
            <person name="Stewart G.S."/>
            <person name="Panier S."/>
            <person name="Townsend K."/>
            <person name="Al-Hakim A.K."/>
            <person name="Kolas N.K."/>
            <person name="Miller E.S."/>
            <person name="Nakada S."/>
            <person name="Ylanko J."/>
            <person name="Olivarius S."/>
            <person name="Mendez M."/>
            <person name="Oldreive C."/>
            <person name="Wildenhain J."/>
            <person name="Tagliaferro A."/>
            <person name="Pelletier L."/>
            <person name="Taubenheim N."/>
            <person name="Durandy A."/>
            <person name="Byrd P.J."/>
            <person name="Stankovic T."/>
            <person name="Taylor A.M.R."/>
            <person name="Durocher D."/>
        </authorList>
    </citation>
    <scope>UBIQUITINATION</scope>
</reference>
<reference key="15">
    <citation type="journal article" date="2009" name="Cell">
        <title>RNF168 binds and amplifies ubiquitin conjugates on damaged chromosomes to allow accumulation of repair proteins.</title>
        <authorList>
            <person name="Doil C."/>
            <person name="Mailand N."/>
            <person name="Bekker-Jensen S."/>
            <person name="Menard P."/>
            <person name="Larsen D.H."/>
            <person name="Pepperkok R."/>
            <person name="Ellenberg J."/>
            <person name="Panier S."/>
            <person name="Durocher D."/>
            <person name="Bartek J."/>
            <person name="Lukas J."/>
            <person name="Lukas C."/>
        </authorList>
    </citation>
    <scope>UBIQUITINATION</scope>
</reference>
<reference key="16">
    <citation type="journal article" date="2011" name="Cell">
        <title>Identification of 67 histone marks and histone lysine crotonylation as a new type of histone modification.</title>
        <authorList>
            <person name="Tan M."/>
            <person name="Luo H."/>
            <person name="Lee S."/>
            <person name="Jin F."/>
            <person name="Yang J.S."/>
            <person name="Montellier E."/>
            <person name="Buchou T."/>
            <person name="Cheng Z."/>
            <person name="Rousseaux S."/>
            <person name="Rajagopal N."/>
            <person name="Lu Z."/>
            <person name="Ye Z."/>
            <person name="Zhu Q."/>
            <person name="Wysocka J."/>
            <person name="Ye Y."/>
            <person name="Khochbin S."/>
            <person name="Ren B."/>
            <person name="Zhao Y."/>
        </authorList>
    </citation>
    <scope>CROTONYLATION AT LYS-37; LYS-119; LYS-120 AND LYS-126</scope>
</reference>
<reference key="17">
    <citation type="journal article" date="2012" name="Cell">
        <title>RNF168 ubiquitinates K13-15 on H2A/H2AX to drive DNA Damage signaling.</title>
        <authorList>
            <person name="Mattiroli F."/>
            <person name="Vissers J.H."/>
            <person name="van Dijk W.J."/>
            <person name="Ikpa P."/>
            <person name="Citterio E."/>
            <person name="Vermeulen W."/>
            <person name="Marteijn J.A."/>
            <person name="Sixma T.K."/>
        </authorList>
    </citation>
    <scope>UBIQUITINATION AT LYS-14 AND LYS-16 BY RNF168</scope>
</reference>
<reference key="18">
    <citation type="journal article" date="2012" name="Cell Cycle">
        <title>A novel ubiquitin mark at the N-terminal tail of histone H2As targeted by RNF168 ubiquitin ligase.</title>
        <authorList>
            <person name="Gatti M."/>
            <person name="Pinato S."/>
            <person name="Maspero E."/>
            <person name="Soffientini P."/>
            <person name="Polo S."/>
            <person name="Penengo L."/>
        </authorList>
    </citation>
    <scope>UBIQUITINATION AT LYS-14 AND LYS-16 BY RNF168</scope>
</reference>
<reference key="19">
    <citation type="journal article" date="2012" name="Mol. Cell. Proteomics">
        <title>Lysine succinylation and lysine malonylation in histones.</title>
        <authorList>
            <person name="Xie Z."/>
            <person name="Dai J."/>
            <person name="Dai L."/>
            <person name="Tan M."/>
            <person name="Cheng Z."/>
            <person name="Wu Y."/>
            <person name="Boeke J.D."/>
            <person name="Zhao Y."/>
        </authorList>
    </citation>
    <scope>SUCCINYLATION AT LYS-10 AND LYS-96</scope>
</reference>
<reference key="20">
    <citation type="journal article" date="2013" name="Mol. Cell">
        <title>VprBP has intrinsic kinase activity targeting histone H2A and represses gene transcription.</title>
        <authorList>
            <person name="Kim K."/>
            <person name="Kim J.M."/>
            <person name="Kim J.S."/>
            <person name="Choi J."/>
            <person name="Lee Y.S."/>
            <person name="Neamati N."/>
            <person name="Song J.S."/>
            <person name="Heo K."/>
            <person name="An W."/>
        </authorList>
    </citation>
    <scope>PHOSPHORYLATION AT THR-121</scope>
</reference>
<reference key="21">
    <citation type="journal article" date="2014" name="Nat. Chem. Biol.">
        <title>Lysine 2-hydroxyisobutyrylation is a widely distributed active histone mark.</title>
        <authorList>
            <person name="Dai L."/>
            <person name="Peng C."/>
            <person name="Montellier E."/>
            <person name="Lu Z."/>
            <person name="Chen Y."/>
            <person name="Ishii H."/>
            <person name="Debernardi A."/>
            <person name="Buchou T."/>
            <person name="Rousseaux S."/>
            <person name="Jin F."/>
            <person name="Sabari B.R."/>
            <person name="Deng Z."/>
            <person name="Allis C.D."/>
            <person name="Ren B."/>
            <person name="Khochbin S."/>
            <person name="Zhao Y."/>
        </authorList>
    </citation>
    <scope>HYDROXYBUTYRYLATION AT LYS-6; LYS-10; LYS-37; LYS-75; LYS-76; LYS-96 AND LYS-119</scope>
</reference>
<reference key="22">
    <citation type="journal article" date="2014" name="Nature">
        <title>Glutamine methylation in histone H2A is an RNA-polymerase-I-dedicated modification.</title>
        <authorList>
            <person name="Tessarz P."/>
            <person name="Santos-Rosa H."/>
            <person name="Robson S.C."/>
            <person name="Sylvestersen K.B."/>
            <person name="Nelson C.J."/>
            <person name="Nielsen M.L."/>
            <person name="Kouzarides T."/>
        </authorList>
    </citation>
    <scope>METHYLATION AT GLN-105</scope>
</reference>
<reference key="23">
    <citation type="journal article" date="2014" name="Nature">
        <title>TRIM37 is a new histone H2A ubiquitin ligase and breast cancer oncoprotein.</title>
        <authorList>
            <person name="Bhatnagar S."/>
            <person name="Gazin C."/>
            <person name="Chamberlain L."/>
            <person name="Ou J."/>
            <person name="Zhu X."/>
            <person name="Tushir J.S."/>
            <person name="Virbasius C.M."/>
            <person name="Lin L."/>
            <person name="Zhu L.J."/>
            <person name="Wajapeyee N."/>
            <person name="Green M.R."/>
        </authorList>
    </citation>
    <scope>UBIQUITINATION AT LYS-120</scope>
</reference>
<reference key="24">
    <citation type="journal article" date="2016" name="Genes Dev.">
        <title>USP51 deubiquitylates H2AK13,15ub and regulates DNA damage response.</title>
        <authorList>
            <person name="Wang Z."/>
            <person name="Zhang H."/>
            <person name="Liu J."/>
            <person name="Cheruiyot A."/>
            <person name="Lee J.H."/>
            <person name="Ordog T."/>
            <person name="Lou Z."/>
            <person name="You Z."/>
            <person name="Zhang Z."/>
        </authorList>
    </citation>
    <scope>DEUBIQUITINATION AT LYS-14 AND LYS-16 BY USP51</scope>
</reference>
<reference key="25">
    <citation type="journal article" date="2016" name="Mol. Cell">
        <title>Metabolic regulation of gene expression by histone lysine beta-hydroxybutyrylation.</title>
        <authorList>
            <person name="Xie Z."/>
            <person name="Zhang D."/>
            <person name="Chung D."/>
            <person name="Tang Z."/>
            <person name="Huang H."/>
            <person name="Dai L."/>
            <person name="Qi S."/>
            <person name="Li J."/>
            <person name="Colak G."/>
            <person name="Chen Y."/>
            <person name="Xia C."/>
            <person name="Peng C."/>
            <person name="Ruan H."/>
            <person name="Kirkey M."/>
            <person name="Wang D."/>
            <person name="Jensen L.M."/>
            <person name="Kwon O.K."/>
            <person name="Lee S."/>
            <person name="Pletcher S.D."/>
            <person name="Tan M."/>
            <person name="Lombard D.B."/>
            <person name="White K.P."/>
            <person name="Zhao H."/>
            <person name="Li J."/>
            <person name="Roeder R.G."/>
            <person name="Yang X."/>
            <person name="Zhao Y."/>
        </authorList>
    </citation>
    <scope>HYDROXYBUTYRYLATION AT LYS-10; LYS-14; LYS-37; LYS-96 AND LYS-119</scope>
</reference>
<reference key="26">
    <citation type="journal article" date="2019" name="Mol. Cell">
        <title>Glutarylation of histone H4 lysine 91 regulates chromatin dynamics.</title>
        <authorList>
            <person name="Bao X."/>
            <person name="Liu Z."/>
            <person name="Zhang W."/>
            <person name="Gladysz K."/>
            <person name="Fung Y.M.E."/>
            <person name="Tian G."/>
            <person name="Xiong Y."/>
            <person name="Wong J.W.H."/>
            <person name="Yuen K.W.Y."/>
            <person name="Li X.D."/>
        </authorList>
    </citation>
    <scope>GLUTARYLATION AT LYS-96; LYS-119; LYS-120 AND LYS-126</scope>
</reference>
<feature type="initiator methionine" description="Removed" evidence="8">
    <location>
        <position position="1"/>
    </location>
</feature>
<feature type="chain" id="PRO_0000230201" description="Histone H2A type 3">
    <location>
        <begin position="2"/>
        <end position="130"/>
    </location>
</feature>
<feature type="region of interest" description="Disordered" evidence="4">
    <location>
        <begin position="1"/>
        <end position="22"/>
    </location>
</feature>
<feature type="compositionally biased region" description="Basic residues" evidence="4">
    <location>
        <begin position="7"/>
        <end position="19"/>
    </location>
</feature>
<feature type="modified residue" description="N-acetylserine" evidence="8">
    <location>
        <position position="2"/>
    </location>
</feature>
<feature type="modified residue" description="Phosphoserine; by RPS6KA5" evidence="5">
    <location>
        <position position="2"/>
    </location>
</feature>
<feature type="modified residue" description="Citrulline; alternate" evidence="8">
    <location>
        <position position="4"/>
    </location>
</feature>
<feature type="modified residue" description="Symmetric dimethylarginine; by PRMT5; alternate" evidence="3">
    <location>
        <position position="4"/>
    </location>
</feature>
<feature type="modified residue" description="N6-(2-hydroxyisobutyryl)lysine" evidence="21">
    <location>
        <position position="6"/>
    </location>
</feature>
<feature type="modified residue" description="N6-(2-hydroxyisobutyryl)lysine; alternate" evidence="21">
    <location>
        <position position="10"/>
    </location>
</feature>
<feature type="modified residue" description="N6-(beta-hydroxybutyryl)lysine; alternate" evidence="24">
    <location>
        <position position="10"/>
    </location>
</feature>
<feature type="modified residue" description="N6-lactoyllysine; alternate" evidence="1">
    <location>
        <position position="10"/>
    </location>
</feature>
<feature type="modified residue" description="N6-succinyllysine; alternate" evidence="16">
    <location>
        <position position="10"/>
    </location>
</feature>
<feature type="modified residue" description="N6-(beta-hydroxybutyryl)lysine; alternate" evidence="24">
    <location>
        <position position="14"/>
    </location>
</feature>
<feature type="modified residue" description="N6-(2-hydroxyisobutyryl)lysine; alternate" evidence="21">
    <location>
        <position position="37"/>
    </location>
</feature>
<feature type="modified residue" description="N6-(beta-hydroxybutyryl)lysine; alternate" evidence="24">
    <location>
        <position position="37"/>
    </location>
</feature>
<feature type="modified residue" description="N6-crotonyllysine; alternate" evidence="15">
    <location>
        <position position="37"/>
    </location>
</feature>
<feature type="modified residue" description="N6-(2-hydroxyisobutyryl)lysine" evidence="21">
    <location>
        <position position="75"/>
    </location>
</feature>
<feature type="modified residue" description="N6-(2-hydroxyisobutyryl)lysine" evidence="21">
    <location>
        <position position="76"/>
    </location>
</feature>
<feature type="modified residue" description="N6-(2-hydroxyisobutyryl)lysine; alternate" evidence="21">
    <location>
        <position position="96"/>
    </location>
</feature>
<feature type="modified residue" description="N6-(beta-hydroxybutyryl)lysine; alternate" evidence="24">
    <location>
        <position position="96"/>
    </location>
</feature>
<feature type="modified residue" description="N6-glutaryllysine; alternate" evidence="25">
    <location>
        <position position="96"/>
    </location>
</feature>
<feature type="modified residue" description="N6-succinyllysine; alternate" evidence="16">
    <location>
        <position position="96"/>
    </location>
</feature>
<feature type="modified residue" description="N5-methylglutamine" evidence="20">
    <location>
        <position position="105"/>
    </location>
</feature>
<feature type="modified residue" description="N6-(2-hydroxyisobutyryl)lysine; alternate" evidence="21">
    <location>
        <position position="119"/>
    </location>
</feature>
<feature type="modified residue" description="N6-(beta-hydroxybutyryl)lysine; alternate" evidence="24">
    <location>
        <position position="119"/>
    </location>
</feature>
<feature type="modified residue" description="N6-crotonyllysine; alternate" evidence="15">
    <location>
        <position position="119"/>
    </location>
</feature>
<feature type="modified residue" description="N6-glutaryllysine; alternate" evidence="25">
    <location>
        <position position="119"/>
    </location>
</feature>
<feature type="modified residue" description="N6-crotonyllysine; alternate" evidence="15">
    <location>
        <position position="120"/>
    </location>
</feature>
<feature type="modified residue" description="N6-glutaryllysine; alternate" evidence="25">
    <location>
        <position position="120"/>
    </location>
</feature>
<feature type="modified residue" description="Phosphothreonine; by DCAF1" evidence="6 19">
    <location>
        <position position="121"/>
    </location>
</feature>
<feature type="modified residue" description="N6-crotonyllysine; alternate" evidence="15">
    <location>
        <position position="126"/>
    </location>
</feature>
<feature type="modified residue" description="N6-glutaryllysine; alternate" evidence="25">
    <location>
        <position position="126"/>
    </location>
</feature>
<feature type="cross-link" description="Glycyl lysine isopeptide (Lys-Gly) (interchain with G-Cter in ubiquitin); alternate" evidence="17 18">
    <location>
        <position position="14"/>
    </location>
</feature>
<feature type="cross-link" description="Glycyl lysine isopeptide (Lys-Gly) (interchain with G-Cter in ubiquitin)" evidence="17 18">
    <location>
        <position position="16"/>
    </location>
</feature>
<feature type="cross-link" description="Glycyl lysine isopeptide (Lys-Gly) (interchain with G-Cter in ubiquitin); alternate" evidence="7 9 10 22">
    <location>
        <position position="120"/>
    </location>
</feature>
<feature type="mutagenesis site" description="Blocks the inhibition of transcription by RPS6KA5/MSK1." evidence="5">
    <original>S</original>
    <variation>A</variation>
    <location>
        <position position="2"/>
    </location>
</feature>
<feature type="helix" evidence="28">
    <location>
        <begin position="18"/>
        <end position="22"/>
    </location>
</feature>
<feature type="helix" evidence="28">
    <location>
        <begin position="28"/>
        <end position="37"/>
    </location>
</feature>
<feature type="strand" evidence="28">
    <location>
        <begin position="42"/>
        <end position="44"/>
    </location>
</feature>
<feature type="helix" evidence="28">
    <location>
        <begin position="48"/>
        <end position="73"/>
    </location>
</feature>
<feature type="strand" evidence="28">
    <location>
        <begin position="77"/>
        <end position="79"/>
    </location>
</feature>
<feature type="helix" evidence="28">
    <location>
        <begin position="81"/>
        <end position="90"/>
    </location>
</feature>
<feature type="helix" evidence="28">
    <location>
        <begin position="92"/>
        <end position="97"/>
    </location>
</feature>
<feature type="turn" evidence="28">
    <location>
        <begin position="98"/>
        <end position="100"/>
    </location>
</feature>
<feature type="strand" evidence="28">
    <location>
        <begin position="101"/>
        <end position="103"/>
    </location>
</feature>
<feature type="turn" evidence="28">
    <location>
        <begin position="114"/>
        <end position="116"/>
    </location>
</feature>
<comment type="function">
    <text>Core component of nucleosome. Nucleosomes wrap and compact DNA into chromatin, limiting DNA accessibility to the cellular machineries which require DNA as a template. Histones thereby play a central role in transcription regulation, DNA repair, DNA replication and chromosomal stability. DNA accessibility is regulated via a complex set of post-translational modifications of histones, also called histone code, and nucleosome remodeling.</text>
</comment>
<comment type="subunit">
    <text>The nucleosome is a histone octamer containing two molecules each of H2A, H2B, H3 and H4 assembled in one H3-H4 heterotetramer and two H2A-H2B heterodimers. The octamer wraps approximately 147 bp of DNA.</text>
</comment>
<comment type="interaction">
    <interactant intactId="EBI-5325551">
        <id>Q7L7L0</id>
    </interactant>
    <interactant intactId="EBI-7116203">
        <id>O75031</id>
        <label>HSF2BP</label>
    </interactant>
    <organismsDiffer>false</organismsDiffer>
    <experiments>3</experiments>
</comment>
<comment type="interaction">
    <interactant intactId="EBI-5325551">
        <id>Q7L7L0</id>
    </interactant>
    <interactant intactId="EBI-713665">
        <id>P19404</id>
        <label>NDUFV2</label>
    </interactant>
    <organismsDiffer>false</organismsDiffer>
    <experiments>3</experiments>
</comment>
<comment type="interaction">
    <interactant intactId="EBI-5325551">
        <id>Q7L7L0</id>
    </interactant>
    <interactant intactId="EBI-712629">
        <id>P63146</id>
        <label>UBE2B</label>
    </interactant>
    <organismsDiffer>false</organismsDiffer>
    <experiments>2</experiments>
</comment>
<comment type="subcellular location">
    <subcellularLocation>
        <location>Nucleus</location>
    </subcellularLocation>
    <subcellularLocation>
        <location>Chromosome</location>
    </subcellularLocation>
</comment>
<comment type="PTM">
    <text evidence="8">Deiminated on Arg-4 in granulocytes upon calcium entry.</text>
</comment>
<comment type="PTM">
    <text evidence="7 9 10 11 12 13 14 17 18 20 22 23">Monoubiquitination of Lys-120 (H2AK119Ub) by RING1, TRIM37 and RNF2/RING2 complex gives a specific tag for epigenetic transcriptional repression and participates in X chromosome inactivation of female mammals. It is involved in the initiation of both imprinted and random X inactivation. Ubiquitinated H2A is enriched in inactive X chromosome chromatin. Ubiquitination of H2A functions downstream of methylation of 'Lys-27' of histone H3 (H3K27me). H2AK119Ub by RNF2/RING2 can also be induced by ultraviolet and may be involved in DNA repair. Monoubiquitination of Lys-120 (H2AK119Ub) by TRIM37 may promote transformation of cells in a number of breast cancers (PubMed:25470042). Following DNA double-strand breaks (DSBs), it is ubiquitinated through 'Lys-63' linkage of ubiquitin moieties by the E2 ligase UBE2N and the E3 ligases RNF8 and RNF168, leading to the recruitment of repair proteins to sites of DNA damage. Ubiquitination at Lys-14 and Lys-16 (H2AK13Ub and H2AK15Ub, respectively) in response to DNA damage is initiated by RNF168 that mediates monoubiquitination at these 2 sites, and 'Lys-63'-linked ubiquitin are then conjugated to monoubiquitin; RNF8 is able to extend 'Lys-63'-linked ubiquitin chains in vitro. Deubiquitinated by USP51 at Lys-14 and Lys-16 (H2AK13Ub and H2AK15Ub, respectively) after damaged DNA is repaired (PubMed:27083998). H2AK119Ub and ionizing radiation-induced 'Lys-63'-linked ubiquitination (H2AK13Ub and H2AK15Ub) are distinct events.</text>
</comment>
<comment type="PTM">
    <text evidence="5 6 8 19">Phosphorylation on Ser-2 (H2AS1ph) is enhanced during mitosis. Phosphorylation on Ser-2 by RPS6KA5/MSK1 directly represses transcription. Acetylation of H3 inhibits Ser-2 phosphorylation by RPS6KA5/MSK1. Phosphorylation at Thr-121 (H2AT120ph) by DCAF1 is present in the regulatory region of many tumor suppresor genes and down-regulates their transcription.</text>
</comment>
<comment type="PTM">
    <text evidence="20">Glutamine methylation at Gln-105 (H2AQ104me) by FBL is specifically dedicated to polymerase I. It is present at 35S ribosomal DNA locus and impairs binding of the FACT complex (PubMed:24352239).</text>
</comment>
<comment type="PTM">
    <text evidence="2">Symmetric dimethylation on Arg-4 by the PRDM1/PRMT5 complex may play a crucial role in the germ-cell lineage.</text>
</comment>
<comment type="PTM">
    <text evidence="15">Crotonylation (Kcr) is specifically present in male germ cells and marks testis-specific genes in post-meiotic cells, including X-linked genes that escape sex chromosome inactivation in haploid cells. Crotonylation marks active promoters and enhancers and confers resistance to transcriptional repressors. It is also associated with post-meiotically activated genes on autosomes.</text>
</comment>
<comment type="PTM">
    <text evidence="1">Lactylated in macrophages by EP300/P300 by using lactoyl-CoA directly derived from endogenous or exogenous lactate, leading to stimulates gene transcription.</text>
</comment>
<comment type="similarity">
    <text evidence="26">Belongs to the histone H2A family.</text>
</comment>
<proteinExistence type="evidence at protein level"/>
<gene>
    <name evidence="27" type="primary">H2AC25</name>
    <name evidence="27" type="synonym">H2AW</name>
    <name evidence="27" type="synonym">HIST3H2A</name>
</gene>
<dbReference type="EMBL" id="AY131974">
    <property type="protein sequence ID" value="AAN59960.1"/>
    <property type="molecule type" value="Genomic_DNA"/>
</dbReference>
<dbReference type="EMBL" id="AK311930">
    <property type="protein sequence ID" value="BAG34871.1"/>
    <property type="molecule type" value="mRNA"/>
</dbReference>
<dbReference type="EMBL" id="AL139288">
    <property type="status" value="NOT_ANNOTATED_CDS"/>
    <property type="molecule type" value="Genomic_DNA"/>
</dbReference>
<dbReference type="EMBL" id="CH471098">
    <property type="protein sequence ID" value="EAW69878.1"/>
    <property type="molecule type" value="Genomic_DNA"/>
</dbReference>
<dbReference type="EMBL" id="BC082269">
    <property type="status" value="NOT_ANNOTATED_CDS"/>
    <property type="molecule type" value="mRNA"/>
</dbReference>
<dbReference type="CCDS" id="CCDS1573.1"/>
<dbReference type="RefSeq" id="NP_254280.1">
    <property type="nucleotide sequence ID" value="NM_033445.3"/>
</dbReference>
<dbReference type="PDB" id="9FH9">
    <property type="method" value="EM"/>
    <property type="resolution" value="2.50 A"/>
    <property type="chains" value="C/G=1-130"/>
</dbReference>
<dbReference type="PDBsum" id="9FH9"/>
<dbReference type="EMDB" id="EMD-50443"/>
<dbReference type="SMR" id="Q7L7L0"/>
<dbReference type="BioGRID" id="124981">
    <property type="interactions" value="83"/>
</dbReference>
<dbReference type="DIP" id="DIP-48936N"/>
<dbReference type="FunCoup" id="Q7L7L0">
    <property type="interactions" value="527"/>
</dbReference>
<dbReference type="IntAct" id="Q7L7L0">
    <property type="interactions" value="34"/>
</dbReference>
<dbReference type="MINT" id="Q7L7L0"/>
<dbReference type="STRING" id="9606.ENSP00000355656"/>
<dbReference type="GlyGen" id="Q7L7L0">
    <property type="glycosylation" value="1 site, 1 O-linked glycan (1 site)"/>
</dbReference>
<dbReference type="iPTMnet" id="Q7L7L0"/>
<dbReference type="PhosphoSitePlus" id="Q7L7L0"/>
<dbReference type="SwissPalm" id="Q7L7L0"/>
<dbReference type="BioMuta" id="HIST3H2A"/>
<dbReference type="DMDM" id="74749897"/>
<dbReference type="jPOST" id="Q7L7L0"/>
<dbReference type="MassIVE" id="Q7L7L0"/>
<dbReference type="PaxDb" id="9606-ENSP00000355656"/>
<dbReference type="PeptideAtlas" id="Q7L7L0"/>
<dbReference type="PRIDE" id="Q7L7L0"/>
<dbReference type="Pumba" id="Q7L7L0"/>
<dbReference type="TopDownProteomics" id="Q7L7L0"/>
<dbReference type="Antibodypedia" id="34667">
    <property type="antibodies" value="65 antibodies from 16 providers"/>
</dbReference>
<dbReference type="DNASU" id="92815"/>
<dbReference type="Ensembl" id="ENST00000366695.3">
    <property type="protein sequence ID" value="ENSP00000355656.2"/>
    <property type="gene ID" value="ENSG00000181218.6"/>
</dbReference>
<dbReference type="Ensembl" id="ENST00000645741.1">
    <property type="protein sequence ID" value="ENSP00000493926.1"/>
    <property type="gene ID" value="ENSG00000284841.1"/>
</dbReference>
<dbReference type="Ensembl" id="ENST00000689584.1">
    <property type="protein sequence ID" value="ENSP00000508783.1"/>
    <property type="gene ID" value="ENSG00000181218.6"/>
</dbReference>
<dbReference type="Ensembl" id="ENST00000691624.1">
    <property type="protein sequence ID" value="ENSP00000510421.1"/>
    <property type="gene ID" value="ENSG00000181218.6"/>
</dbReference>
<dbReference type="GeneID" id="92815"/>
<dbReference type="KEGG" id="hsa:92815"/>
<dbReference type="MANE-Select" id="ENST00000689584.1">
    <property type="protein sequence ID" value="ENSP00000508783.1"/>
    <property type="RefSeq nucleotide sequence ID" value="NM_033445.3"/>
    <property type="RefSeq protein sequence ID" value="NP_254280.1"/>
</dbReference>
<dbReference type="UCSC" id="uc001hsy.4">
    <property type="organism name" value="human"/>
</dbReference>
<dbReference type="AGR" id="HGNC:20507"/>
<dbReference type="CTD" id="92815"/>
<dbReference type="DisGeNET" id="92815"/>
<dbReference type="GeneCards" id="H2AC25"/>
<dbReference type="HGNC" id="HGNC:20507">
    <property type="gene designation" value="H2AC25"/>
</dbReference>
<dbReference type="HPA" id="ENSG00000181218">
    <property type="expression patterns" value="Tissue enhanced (brain)"/>
</dbReference>
<dbReference type="MIM" id="615015">
    <property type="type" value="gene"/>
</dbReference>
<dbReference type="neXtProt" id="NX_Q7L7L0"/>
<dbReference type="OpenTargets" id="ENSG00000181218"/>
<dbReference type="VEuPathDB" id="HostDB:ENSG00000181218"/>
<dbReference type="eggNOG" id="KOG1756">
    <property type="taxonomic scope" value="Eukaryota"/>
</dbReference>
<dbReference type="GeneTree" id="ENSGT00940000153092"/>
<dbReference type="HOGENOM" id="CLU_062828_3_1_1"/>
<dbReference type="InParanoid" id="Q7L7L0"/>
<dbReference type="OMA" id="KFQMAGR"/>
<dbReference type="OrthoDB" id="9829024at2759"/>
<dbReference type="PAN-GO" id="Q7L7L0">
    <property type="GO annotations" value="1 GO annotation based on evolutionary models"/>
</dbReference>
<dbReference type="PhylomeDB" id="Q7L7L0"/>
<dbReference type="TreeFam" id="TF300137"/>
<dbReference type="PathwayCommons" id="Q7L7L0"/>
<dbReference type="Reactome" id="R-HSA-3214815">
    <property type="pathway name" value="HDACs deacetylate histones"/>
</dbReference>
<dbReference type="Reactome" id="R-HSA-3214847">
    <property type="pathway name" value="HATs acetylate histones"/>
</dbReference>
<dbReference type="Reactome" id="R-HSA-3214858">
    <property type="pathway name" value="RMTs methylate histone arginines"/>
</dbReference>
<dbReference type="Reactome" id="R-HSA-5689603">
    <property type="pathway name" value="UCH proteinases"/>
</dbReference>
<dbReference type="Reactome" id="R-HSA-5689880">
    <property type="pathway name" value="Ub-specific processing proteases"/>
</dbReference>
<dbReference type="Reactome" id="R-HSA-5689901">
    <property type="pathway name" value="Metalloprotease DUBs"/>
</dbReference>
<dbReference type="Reactome" id="R-HSA-9609690">
    <property type="pathway name" value="HCMV Early Events"/>
</dbReference>
<dbReference type="Reactome" id="R-HSA-9610379">
    <property type="pathway name" value="HCMV Late Events"/>
</dbReference>
<dbReference type="SignaLink" id="Q7L7L0"/>
<dbReference type="SIGNOR" id="Q7L7L0"/>
<dbReference type="BioGRID-ORCS" id="92815">
    <property type="hits" value="44 hits in 1142 CRISPR screens"/>
</dbReference>
<dbReference type="CD-CODE" id="91857CE7">
    <property type="entry name" value="Nucleolus"/>
</dbReference>
<dbReference type="GeneWiki" id="HIST3H2A"/>
<dbReference type="GenomeRNAi" id="92815"/>
<dbReference type="Pharos" id="Q7L7L0">
    <property type="development level" value="Tbio"/>
</dbReference>
<dbReference type="PRO" id="PR:Q7L7L0"/>
<dbReference type="Proteomes" id="UP000005640">
    <property type="component" value="Chromosome 1"/>
</dbReference>
<dbReference type="RNAct" id="Q7L7L0">
    <property type="molecule type" value="protein"/>
</dbReference>
<dbReference type="Bgee" id="ENSG00000181218">
    <property type="expression patterns" value="Expressed in cerebellar hemisphere and 97 other cell types or tissues"/>
</dbReference>
<dbReference type="GO" id="GO:0070062">
    <property type="term" value="C:extracellular exosome"/>
    <property type="evidence" value="ECO:0007005"/>
    <property type="project" value="UniProtKB"/>
</dbReference>
<dbReference type="GO" id="GO:0000786">
    <property type="term" value="C:nucleosome"/>
    <property type="evidence" value="ECO:0000314"/>
    <property type="project" value="UniProtKB"/>
</dbReference>
<dbReference type="GO" id="GO:0005634">
    <property type="term" value="C:nucleus"/>
    <property type="evidence" value="ECO:0000318"/>
    <property type="project" value="GO_Central"/>
</dbReference>
<dbReference type="GO" id="GO:0003677">
    <property type="term" value="F:DNA binding"/>
    <property type="evidence" value="ECO:0000314"/>
    <property type="project" value="UniProtKB"/>
</dbReference>
<dbReference type="GO" id="GO:0046982">
    <property type="term" value="F:protein heterodimerization activity"/>
    <property type="evidence" value="ECO:0007669"/>
    <property type="project" value="InterPro"/>
</dbReference>
<dbReference type="GO" id="GO:0030527">
    <property type="term" value="F:structural constituent of chromatin"/>
    <property type="evidence" value="ECO:0000318"/>
    <property type="project" value="GO_Central"/>
</dbReference>
<dbReference type="GO" id="GO:0031507">
    <property type="term" value="P:heterochromatin formation"/>
    <property type="evidence" value="ECO:0000318"/>
    <property type="project" value="GO_Central"/>
</dbReference>
<dbReference type="GO" id="GO:0006337">
    <property type="term" value="P:nucleosome disassembly"/>
    <property type="evidence" value="ECO:0000315"/>
    <property type="project" value="UniProtKB"/>
</dbReference>
<dbReference type="GO" id="GO:0070914">
    <property type="term" value="P:UV-damage excision repair"/>
    <property type="evidence" value="ECO:0000315"/>
    <property type="project" value="UniProtKB"/>
</dbReference>
<dbReference type="CDD" id="cd00074">
    <property type="entry name" value="HFD_H2A"/>
    <property type="match status" value="1"/>
</dbReference>
<dbReference type="FunFam" id="1.10.20.10:FF:000103">
    <property type="entry name" value="Histone H2A type 1"/>
    <property type="match status" value="1"/>
</dbReference>
<dbReference type="Gene3D" id="1.10.20.10">
    <property type="entry name" value="Histone, subunit A"/>
    <property type="match status" value="1"/>
</dbReference>
<dbReference type="InterPro" id="IPR009072">
    <property type="entry name" value="Histone-fold"/>
</dbReference>
<dbReference type="InterPro" id="IPR002119">
    <property type="entry name" value="Histone_H2A"/>
</dbReference>
<dbReference type="InterPro" id="IPR007125">
    <property type="entry name" value="Histone_H2A/H2B/H3"/>
</dbReference>
<dbReference type="InterPro" id="IPR032454">
    <property type="entry name" value="Histone_H2A_C"/>
</dbReference>
<dbReference type="InterPro" id="IPR032458">
    <property type="entry name" value="Histone_H2A_CS"/>
</dbReference>
<dbReference type="PANTHER" id="PTHR23430">
    <property type="entry name" value="HISTONE H2A"/>
    <property type="match status" value="1"/>
</dbReference>
<dbReference type="Pfam" id="PF00125">
    <property type="entry name" value="Histone"/>
    <property type="match status" value="1"/>
</dbReference>
<dbReference type="Pfam" id="PF16211">
    <property type="entry name" value="Histone_H2A_C"/>
    <property type="match status" value="1"/>
</dbReference>
<dbReference type="PRINTS" id="PR00620">
    <property type="entry name" value="HISTONEH2A"/>
</dbReference>
<dbReference type="SMART" id="SM00414">
    <property type="entry name" value="H2A"/>
    <property type="match status" value="1"/>
</dbReference>
<dbReference type="SUPFAM" id="SSF47113">
    <property type="entry name" value="Histone-fold"/>
    <property type="match status" value="1"/>
</dbReference>
<dbReference type="PROSITE" id="PS00046">
    <property type="entry name" value="HISTONE_H2A"/>
    <property type="match status" value="1"/>
</dbReference>
<sequence>MSGRGKQGGKARAKAKSRSSRAGLQFPVGRVHRLLRKGNYSERVGAGAPVYLAAVLEYLTAEILELAGNAARDNKKTRIIPRHLQLAIRNDEELNKLLGRVTIAQGGVLPNIQAVLLPKKTESHHKAKGK</sequence>
<protein>
    <recommendedName>
        <fullName>Histone H2A type 3</fullName>
    </recommendedName>
    <alternativeName>
        <fullName evidence="27">H2A-clustered histone 25</fullName>
    </alternativeName>
</protein>
<accession>Q7L7L0</accession>
<accession>B2R4S4</accession>
<keyword id="KW-0002">3D-structure</keyword>
<keyword id="KW-0007">Acetylation</keyword>
<keyword id="KW-0158">Chromosome</keyword>
<keyword id="KW-0164">Citrullination</keyword>
<keyword id="KW-0238">DNA-binding</keyword>
<keyword id="KW-0379">Hydroxylation</keyword>
<keyword id="KW-1017">Isopeptide bond</keyword>
<keyword id="KW-0488">Methylation</keyword>
<keyword id="KW-0544">Nucleosome core</keyword>
<keyword id="KW-0539">Nucleus</keyword>
<keyword id="KW-0597">Phosphoprotein</keyword>
<keyword id="KW-1185">Reference proteome</keyword>
<keyword id="KW-0832">Ubl conjugation</keyword>
<organism>
    <name type="scientific">Homo sapiens</name>
    <name type="common">Human</name>
    <dbReference type="NCBI Taxonomy" id="9606"/>
    <lineage>
        <taxon>Eukaryota</taxon>
        <taxon>Metazoa</taxon>
        <taxon>Chordata</taxon>
        <taxon>Craniata</taxon>
        <taxon>Vertebrata</taxon>
        <taxon>Euteleostomi</taxon>
        <taxon>Mammalia</taxon>
        <taxon>Eutheria</taxon>
        <taxon>Euarchontoglires</taxon>
        <taxon>Primates</taxon>
        <taxon>Haplorrhini</taxon>
        <taxon>Catarrhini</taxon>
        <taxon>Hominidae</taxon>
        <taxon>Homo</taxon>
    </lineage>
</organism>